<proteinExistence type="inferred from homology"/>
<organism>
    <name type="scientific">Bordetella pertussis (strain Tohama I / ATCC BAA-589 / NCTC 13251)</name>
    <dbReference type="NCBI Taxonomy" id="257313"/>
    <lineage>
        <taxon>Bacteria</taxon>
        <taxon>Pseudomonadati</taxon>
        <taxon>Pseudomonadota</taxon>
        <taxon>Betaproteobacteria</taxon>
        <taxon>Burkholderiales</taxon>
        <taxon>Alcaligenaceae</taxon>
        <taxon>Bordetella</taxon>
    </lineage>
</organism>
<name>RL22_BORPE</name>
<evidence type="ECO:0000255" key="1">
    <source>
        <dbReference type="HAMAP-Rule" id="MF_01331"/>
    </source>
</evidence>
<evidence type="ECO:0000305" key="2"/>
<accession>Q7VTC8</accession>
<sequence>METTAIIRGVHISAQKTRLVADLIRGKSVAQALNILTFSPKKAAVILKKAVESAIANAEHNDGADIDELKVTTIFVDKAQSMKRFSARAKGRGNRIEKQTCHITVKVGA</sequence>
<feature type="chain" id="PRO_0000125126" description="Large ribosomal subunit protein uL22">
    <location>
        <begin position="1"/>
        <end position="109"/>
    </location>
</feature>
<dbReference type="EMBL" id="BX640422">
    <property type="protein sequence ID" value="CAE43876.1"/>
    <property type="molecule type" value="Genomic_DNA"/>
</dbReference>
<dbReference type="RefSeq" id="NP_882128.1">
    <property type="nucleotide sequence ID" value="NC_002929.2"/>
</dbReference>
<dbReference type="RefSeq" id="WP_010925688.1">
    <property type="nucleotide sequence ID" value="NZ_CP039022.1"/>
</dbReference>
<dbReference type="SMR" id="Q7VTC8"/>
<dbReference type="STRING" id="257313.BP3618"/>
<dbReference type="PaxDb" id="257313-BP3618"/>
<dbReference type="GeneID" id="93206263"/>
<dbReference type="KEGG" id="bpe:BP3618"/>
<dbReference type="PATRIC" id="fig|257313.5.peg.3916"/>
<dbReference type="eggNOG" id="COG0091">
    <property type="taxonomic scope" value="Bacteria"/>
</dbReference>
<dbReference type="HOGENOM" id="CLU_083987_3_3_4"/>
<dbReference type="Proteomes" id="UP000002676">
    <property type="component" value="Chromosome"/>
</dbReference>
<dbReference type="GO" id="GO:0022625">
    <property type="term" value="C:cytosolic large ribosomal subunit"/>
    <property type="evidence" value="ECO:0007669"/>
    <property type="project" value="TreeGrafter"/>
</dbReference>
<dbReference type="GO" id="GO:0019843">
    <property type="term" value="F:rRNA binding"/>
    <property type="evidence" value="ECO:0007669"/>
    <property type="project" value="UniProtKB-UniRule"/>
</dbReference>
<dbReference type="GO" id="GO:0003735">
    <property type="term" value="F:structural constituent of ribosome"/>
    <property type="evidence" value="ECO:0007669"/>
    <property type="project" value="InterPro"/>
</dbReference>
<dbReference type="GO" id="GO:0006412">
    <property type="term" value="P:translation"/>
    <property type="evidence" value="ECO:0007669"/>
    <property type="project" value="UniProtKB-UniRule"/>
</dbReference>
<dbReference type="CDD" id="cd00336">
    <property type="entry name" value="Ribosomal_L22"/>
    <property type="match status" value="1"/>
</dbReference>
<dbReference type="FunFam" id="3.90.470.10:FF:000001">
    <property type="entry name" value="50S ribosomal protein L22"/>
    <property type="match status" value="1"/>
</dbReference>
<dbReference type="Gene3D" id="3.90.470.10">
    <property type="entry name" value="Ribosomal protein L22/L17"/>
    <property type="match status" value="1"/>
</dbReference>
<dbReference type="HAMAP" id="MF_01331_B">
    <property type="entry name" value="Ribosomal_uL22_B"/>
    <property type="match status" value="1"/>
</dbReference>
<dbReference type="InterPro" id="IPR001063">
    <property type="entry name" value="Ribosomal_uL22"/>
</dbReference>
<dbReference type="InterPro" id="IPR005727">
    <property type="entry name" value="Ribosomal_uL22_bac/chlpt-type"/>
</dbReference>
<dbReference type="InterPro" id="IPR047867">
    <property type="entry name" value="Ribosomal_uL22_bac/org-type"/>
</dbReference>
<dbReference type="InterPro" id="IPR018260">
    <property type="entry name" value="Ribosomal_uL22_CS"/>
</dbReference>
<dbReference type="InterPro" id="IPR036394">
    <property type="entry name" value="Ribosomal_uL22_sf"/>
</dbReference>
<dbReference type="NCBIfam" id="TIGR01044">
    <property type="entry name" value="rplV_bact"/>
    <property type="match status" value="1"/>
</dbReference>
<dbReference type="PANTHER" id="PTHR13501">
    <property type="entry name" value="CHLOROPLAST 50S RIBOSOMAL PROTEIN L22-RELATED"/>
    <property type="match status" value="1"/>
</dbReference>
<dbReference type="PANTHER" id="PTHR13501:SF8">
    <property type="entry name" value="LARGE RIBOSOMAL SUBUNIT PROTEIN UL22M"/>
    <property type="match status" value="1"/>
</dbReference>
<dbReference type="Pfam" id="PF00237">
    <property type="entry name" value="Ribosomal_L22"/>
    <property type="match status" value="1"/>
</dbReference>
<dbReference type="SUPFAM" id="SSF54843">
    <property type="entry name" value="Ribosomal protein L22"/>
    <property type="match status" value="1"/>
</dbReference>
<dbReference type="PROSITE" id="PS00464">
    <property type="entry name" value="RIBOSOMAL_L22"/>
    <property type="match status" value="1"/>
</dbReference>
<comment type="function">
    <text evidence="1">This protein binds specifically to 23S rRNA; its binding is stimulated by other ribosomal proteins, e.g. L4, L17, and L20. It is important during the early stages of 50S assembly. It makes multiple contacts with different domains of the 23S rRNA in the assembled 50S subunit and ribosome (By similarity).</text>
</comment>
<comment type="function">
    <text evidence="1">The globular domain of the protein is located near the polypeptide exit tunnel on the outside of the subunit, while an extended beta-hairpin is found that lines the wall of the exit tunnel in the center of the 70S ribosome.</text>
</comment>
<comment type="subunit">
    <text evidence="1">Part of the 50S ribosomal subunit.</text>
</comment>
<comment type="similarity">
    <text evidence="1">Belongs to the universal ribosomal protein uL22 family.</text>
</comment>
<protein>
    <recommendedName>
        <fullName evidence="1">Large ribosomal subunit protein uL22</fullName>
    </recommendedName>
    <alternativeName>
        <fullName evidence="2">50S ribosomal protein L22</fullName>
    </alternativeName>
</protein>
<gene>
    <name evidence="1" type="primary">rplV</name>
    <name type="ordered locus">BP3618</name>
</gene>
<keyword id="KW-1185">Reference proteome</keyword>
<keyword id="KW-0687">Ribonucleoprotein</keyword>
<keyword id="KW-0689">Ribosomal protein</keyword>
<keyword id="KW-0694">RNA-binding</keyword>
<keyword id="KW-0699">rRNA-binding</keyword>
<reference key="1">
    <citation type="journal article" date="2003" name="Nat. Genet.">
        <title>Comparative analysis of the genome sequences of Bordetella pertussis, Bordetella parapertussis and Bordetella bronchiseptica.</title>
        <authorList>
            <person name="Parkhill J."/>
            <person name="Sebaihia M."/>
            <person name="Preston A."/>
            <person name="Murphy L.D."/>
            <person name="Thomson N.R."/>
            <person name="Harris D.E."/>
            <person name="Holden M.T.G."/>
            <person name="Churcher C.M."/>
            <person name="Bentley S.D."/>
            <person name="Mungall K.L."/>
            <person name="Cerdeno-Tarraga A.-M."/>
            <person name="Temple L."/>
            <person name="James K.D."/>
            <person name="Harris B."/>
            <person name="Quail M.A."/>
            <person name="Achtman M."/>
            <person name="Atkin R."/>
            <person name="Baker S."/>
            <person name="Basham D."/>
            <person name="Bason N."/>
            <person name="Cherevach I."/>
            <person name="Chillingworth T."/>
            <person name="Collins M."/>
            <person name="Cronin A."/>
            <person name="Davis P."/>
            <person name="Doggett J."/>
            <person name="Feltwell T."/>
            <person name="Goble A."/>
            <person name="Hamlin N."/>
            <person name="Hauser H."/>
            <person name="Holroyd S."/>
            <person name="Jagels K."/>
            <person name="Leather S."/>
            <person name="Moule S."/>
            <person name="Norberczak H."/>
            <person name="O'Neil S."/>
            <person name="Ormond D."/>
            <person name="Price C."/>
            <person name="Rabbinowitsch E."/>
            <person name="Rutter S."/>
            <person name="Sanders M."/>
            <person name="Saunders D."/>
            <person name="Seeger K."/>
            <person name="Sharp S."/>
            <person name="Simmonds M."/>
            <person name="Skelton J."/>
            <person name="Squares R."/>
            <person name="Squares S."/>
            <person name="Stevens K."/>
            <person name="Unwin L."/>
            <person name="Whitehead S."/>
            <person name="Barrell B.G."/>
            <person name="Maskell D.J."/>
        </authorList>
    </citation>
    <scope>NUCLEOTIDE SEQUENCE [LARGE SCALE GENOMIC DNA]</scope>
    <source>
        <strain>Tohama I / ATCC BAA-589 / NCTC 13251</strain>
    </source>
</reference>